<gene>
    <name type="primary">CD46</name>
    <name type="synonym">MCP</name>
</gene>
<accession>Q5R4D0</accession>
<name>MCP_PONAB</name>
<organism>
    <name type="scientific">Pongo abelii</name>
    <name type="common">Sumatran orangutan</name>
    <name type="synonym">Pongo pygmaeus abelii</name>
    <dbReference type="NCBI Taxonomy" id="9601"/>
    <lineage>
        <taxon>Eukaryota</taxon>
        <taxon>Metazoa</taxon>
        <taxon>Chordata</taxon>
        <taxon>Craniata</taxon>
        <taxon>Vertebrata</taxon>
        <taxon>Euteleostomi</taxon>
        <taxon>Mammalia</taxon>
        <taxon>Eutheria</taxon>
        <taxon>Euarchontoglires</taxon>
        <taxon>Primates</taxon>
        <taxon>Haplorrhini</taxon>
        <taxon>Catarrhini</taxon>
        <taxon>Hominidae</taxon>
        <taxon>Pongo</taxon>
    </lineage>
</organism>
<proteinExistence type="evidence at transcript level"/>
<dbReference type="EMBL" id="CR861321">
    <property type="protein sequence ID" value="CAH93386.1"/>
    <property type="molecule type" value="mRNA"/>
</dbReference>
<dbReference type="RefSeq" id="NP_001127658.1">
    <property type="nucleotide sequence ID" value="NM_001134186.1"/>
</dbReference>
<dbReference type="SMR" id="Q5R4D0"/>
<dbReference type="FunCoup" id="Q5R4D0">
    <property type="interactions" value="187"/>
</dbReference>
<dbReference type="STRING" id="9601.ENSPPYP00000000275"/>
<dbReference type="GlyCosmos" id="Q5R4D0">
    <property type="glycosylation" value="3 sites, No reported glycans"/>
</dbReference>
<dbReference type="GeneID" id="100174740"/>
<dbReference type="KEGG" id="pon:100174740"/>
<dbReference type="CTD" id="4179"/>
<dbReference type="eggNOG" id="ENOG502QPUC">
    <property type="taxonomic scope" value="Eukaryota"/>
</dbReference>
<dbReference type="InParanoid" id="Q5R4D0"/>
<dbReference type="OrthoDB" id="6480633at2759"/>
<dbReference type="Proteomes" id="UP000001595">
    <property type="component" value="Unplaced"/>
</dbReference>
<dbReference type="GO" id="GO:0009986">
    <property type="term" value="C:cell surface"/>
    <property type="evidence" value="ECO:0007669"/>
    <property type="project" value="InterPro"/>
</dbReference>
<dbReference type="GO" id="GO:0002079">
    <property type="term" value="C:inner acrosomal membrane"/>
    <property type="evidence" value="ECO:0007669"/>
    <property type="project" value="UniProtKB-SubCell"/>
</dbReference>
<dbReference type="GO" id="GO:0006958">
    <property type="term" value="P:complement activation, classical pathway"/>
    <property type="evidence" value="ECO:0007669"/>
    <property type="project" value="UniProtKB-KW"/>
</dbReference>
<dbReference type="GO" id="GO:0045087">
    <property type="term" value="P:innate immune response"/>
    <property type="evidence" value="ECO:0007669"/>
    <property type="project" value="UniProtKB-KW"/>
</dbReference>
<dbReference type="GO" id="GO:0007338">
    <property type="term" value="P:single fertilization"/>
    <property type="evidence" value="ECO:0007669"/>
    <property type="project" value="UniProtKB-KW"/>
</dbReference>
<dbReference type="CDD" id="cd00033">
    <property type="entry name" value="CCP"/>
    <property type="match status" value="4"/>
</dbReference>
<dbReference type="FunFam" id="2.10.70.10:FF:000014">
    <property type="entry name" value="Membrane cofactor protein"/>
    <property type="match status" value="1"/>
</dbReference>
<dbReference type="FunFam" id="2.10.70.10:FF:000042">
    <property type="entry name" value="Membrane cofactor protein"/>
    <property type="match status" value="1"/>
</dbReference>
<dbReference type="FunFam" id="2.10.70.10:FF:000046">
    <property type="entry name" value="Membrane cofactor protein"/>
    <property type="match status" value="1"/>
</dbReference>
<dbReference type="Gene3D" id="2.10.70.10">
    <property type="entry name" value="Complement Module, domain 1"/>
    <property type="match status" value="4"/>
</dbReference>
<dbReference type="InterPro" id="IPR017341">
    <property type="entry name" value="CD46"/>
</dbReference>
<dbReference type="InterPro" id="IPR051277">
    <property type="entry name" value="SEZ6_CSMD_C4BPB_Regulators"/>
</dbReference>
<dbReference type="InterPro" id="IPR035976">
    <property type="entry name" value="Sushi/SCR/CCP_sf"/>
</dbReference>
<dbReference type="InterPro" id="IPR000436">
    <property type="entry name" value="Sushi_SCR_CCP_dom"/>
</dbReference>
<dbReference type="PANTHER" id="PTHR45656">
    <property type="entry name" value="PROTEIN CBR-CLEC-78"/>
    <property type="match status" value="1"/>
</dbReference>
<dbReference type="PANTHER" id="PTHR45656:SF4">
    <property type="entry name" value="PROTEIN CBR-CLEC-78"/>
    <property type="match status" value="1"/>
</dbReference>
<dbReference type="Pfam" id="PF00084">
    <property type="entry name" value="Sushi"/>
    <property type="match status" value="4"/>
</dbReference>
<dbReference type="PIRSF" id="PIRSF037971">
    <property type="entry name" value="TLX_CD46"/>
    <property type="match status" value="1"/>
</dbReference>
<dbReference type="SMART" id="SM00032">
    <property type="entry name" value="CCP"/>
    <property type="match status" value="4"/>
</dbReference>
<dbReference type="SUPFAM" id="SSF57535">
    <property type="entry name" value="Complement control module/SCR domain"/>
    <property type="match status" value="4"/>
</dbReference>
<dbReference type="PROSITE" id="PS50923">
    <property type="entry name" value="SUSHI"/>
    <property type="match status" value="4"/>
</dbReference>
<protein>
    <recommendedName>
        <fullName>Membrane cofactor protein</fullName>
    </recommendedName>
    <cdAntigenName>CD46</cdAntigenName>
</protein>
<sequence>MAPPGRRECAFPSRRFPGLLLAALVLLLSSFSDACEEPPTFEAMELIGKPKPYYDIGERVDYKCKKGYFYIPPLATHTICDRNHTWLPVSDDACYRETCPYIGDPLNGQAILANGTYEFGYQIHFICNEGYYLIGNEILYCELKGSVAIWGGKPPICEKVLCTPPPKIKNGKHTFSEVEVFEYLDAVTYSCDPAPGPDPFSLIGESTIYCGDNSVWSHAAPECKVVKCRFPVVENGKQISGFGKKFYYKATVMFECDKGFYLNGSNTIVCDSNSTWDPPVPKCLKGYPKPEEGILDSLDDWVIALIVIAIVVGVAVICAVLYGYLQRRKKKGNADGGAEYATYQTKSTTPAEQRG</sequence>
<evidence type="ECO:0000250" key="1"/>
<evidence type="ECO:0000250" key="2">
    <source>
        <dbReference type="UniProtKB" id="P15529"/>
    </source>
</evidence>
<evidence type="ECO:0000255" key="3"/>
<evidence type="ECO:0000255" key="4">
    <source>
        <dbReference type="PROSITE-ProRule" id="PRU00302"/>
    </source>
</evidence>
<keyword id="KW-0180">Complement pathway</keyword>
<keyword id="KW-0968">Cytoplasmic vesicle</keyword>
<keyword id="KW-1015">Disulfide bond</keyword>
<keyword id="KW-0278">Fertilization</keyword>
<keyword id="KW-0325">Glycoprotein</keyword>
<keyword id="KW-0391">Immunity</keyword>
<keyword id="KW-0399">Innate immunity</keyword>
<keyword id="KW-0472">Membrane</keyword>
<keyword id="KW-1185">Reference proteome</keyword>
<keyword id="KW-0677">Repeat</keyword>
<keyword id="KW-0732">Signal</keyword>
<keyword id="KW-0768">Sushi</keyword>
<keyword id="KW-0812">Transmembrane</keyword>
<keyword id="KW-1133">Transmembrane helix</keyword>
<comment type="function">
    <text evidence="1">Acts as a cofactor for complement factor I, a serine protease which protects autologous cells against complement-mediated injury by cleaving C3b and C4b deposited on host tissue. May be involved in the fusion of the spermatozoa with the oocyte during fertilization. Also acts as a costimulatory factor for T-cells which induces the differentiation of CD4+ into T-regulatory 1 cells. T-regulatory 1 cells suppress immune responses by secreting interleukin-10, and therefore are thought to prevent autoimmunity (By similarity).</text>
</comment>
<comment type="subunit">
    <text evidence="2">Interacts with C3b. Interacts with C4b. Interacts with moesin/MSN.</text>
</comment>
<comment type="subcellular location">
    <subcellularLocation>
        <location evidence="1">Cytoplasmic vesicle</location>
        <location evidence="1">Secretory vesicle</location>
        <location evidence="1">Acrosome inner membrane</location>
        <topology evidence="1">Single-pass type I membrane protein</topology>
    </subcellularLocation>
    <text evidence="1">Inner acrosomal membrane of spermatozoa.</text>
</comment>
<comment type="domain">
    <text evidence="1">Sushi domains 3 and 4 are the most important for interaction with C3b and C4b.</text>
</comment>
<reference key="1">
    <citation type="submission" date="2004-11" db="EMBL/GenBank/DDBJ databases">
        <authorList>
            <consortium name="The German cDNA consortium"/>
        </authorList>
    </citation>
    <scope>NUCLEOTIDE SEQUENCE [LARGE SCALE MRNA]</scope>
    <source>
        <tissue>Brain cortex</tissue>
    </source>
</reference>
<feature type="signal peptide" evidence="3">
    <location>
        <begin position="1"/>
        <end position="34"/>
    </location>
</feature>
<feature type="chain" id="PRO_0000238973" description="Membrane cofactor protein">
    <location>
        <begin position="35"/>
        <end position="355"/>
    </location>
</feature>
<feature type="topological domain" description="Extracellular" evidence="3">
    <location>
        <begin position="35"/>
        <end position="300"/>
    </location>
</feature>
<feature type="transmembrane region" description="Helical" evidence="3">
    <location>
        <begin position="301"/>
        <end position="321"/>
    </location>
</feature>
<feature type="topological domain" description="Cytoplasmic" evidence="3">
    <location>
        <begin position="322"/>
        <end position="355"/>
    </location>
</feature>
<feature type="domain" description="Sushi 1" evidence="4">
    <location>
        <begin position="35"/>
        <end position="96"/>
    </location>
</feature>
<feature type="domain" description="Sushi 2" evidence="4">
    <location>
        <begin position="97"/>
        <end position="159"/>
    </location>
</feature>
<feature type="domain" description="Sushi 3" evidence="4">
    <location>
        <begin position="160"/>
        <end position="225"/>
    </location>
</feature>
<feature type="domain" description="Sushi 4" evidence="4">
    <location>
        <begin position="226"/>
        <end position="285"/>
    </location>
</feature>
<feature type="glycosylation site" description="N-linked (GlcNAc...) asparagine" evidence="3">
    <location>
        <position position="114"/>
    </location>
</feature>
<feature type="glycosylation site" description="O-linked (GalNAc...) threonine" evidence="3">
    <location>
        <position position="163"/>
    </location>
</feature>
<feature type="glycosylation site" description="N-linked (GlcNAc...) asparagine" evidence="3">
    <location>
        <position position="263"/>
    </location>
</feature>
<feature type="disulfide bond" evidence="4">
    <location>
        <begin position="99"/>
        <end position="141"/>
    </location>
</feature>
<feature type="disulfide bond" evidence="4">
    <location>
        <begin position="127"/>
        <end position="157"/>
    </location>
</feature>
<feature type="disulfide bond" evidence="4">
    <location>
        <begin position="162"/>
        <end position="210"/>
    </location>
</feature>
<feature type="disulfide bond" evidence="4">
    <location>
        <begin position="191"/>
        <end position="223"/>
    </location>
</feature>
<feature type="disulfide bond" evidence="4">
    <location>
        <begin position="228"/>
        <end position="270"/>
    </location>
</feature>
<feature type="disulfide bond" evidence="4">
    <location>
        <begin position="256"/>
        <end position="283"/>
    </location>
</feature>